<comment type="function">
    <text evidence="1">Insect-specific toxin. Blocks voltage-gated potassium and sodium channels.</text>
</comment>
<comment type="subcellular location">
    <subcellularLocation>
        <location evidence="1">Secreted</location>
    </subcellularLocation>
</comment>
<comment type="tissue specificity">
    <text evidence="4">Expressed by the venom gland.</text>
</comment>
<comment type="PTM">
    <text evidence="1">Contains 4 disulfide bonds.</text>
</comment>
<comment type="mass spectrometry"/>
<comment type="toxic dose">
    <text evidence="1">LD(50) is 573 ng/g in P.americana.</text>
</comment>
<dbReference type="GO" id="GO:0005576">
    <property type="term" value="C:extracellular region"/>
    <property type="evidence" value="ECO:0007669"/>
    <property type="project" value="UniProtKB-SubCell"/>
</dbReference>
<dbReference type="GO" id="GO:0015459">
    <property type="term" value="F:potassium channel regulator activity"/>
    <property type="evidence" value="ECO:0007669"/>
    <property type="project" value="UniProtKB-KW"/>
</dbReference>
<dbReference type="GO" id="GO:0017080">
    <property type="term" value="F:sodium channel regulator activity"/>
    <property type="evidence" value="ECO:0007669"/>
    <property type="project" value="UniProtKB-KW"/>
</dbReference>
<dbReference type="GO" id="GO:0090729">
    <property type="term" value="F:toxin activity"/>
    <property type="evidence" value="ECO:0007669"/>
    <property type="project" value="UniProtKB-KW"/>
</dbReference>
<protein>
    <recommendedName>
        <fullName evidence="2">Insect toxin mu-NPTX-Nc1a</fullName>
    </recommendedName>
    <alternativeName>
        <fullName evidence="3">Mu/kappa-nephilitoxin-Nc1a</fullName>
        <shortName evidence="3">Mu/kappa-NPTX-Nc1a</shortName>
    </alternativeName>
</protein>
<feature type="signal peptide" evidence="1">
    <location>
        <begin position="1"/>
        <end position="19"/>
    </location>
</feature>
<feature type="chain" id="PRO_0000442018" description="Insect toxin mu-NPTX-Nc1a" evidence="1">
    <location>
        <begin position="20"/>
        <end position="60"/>
    </location>
</feature>
<accession>C0HL38</accession>
<name>TX1A_TRICU</name>
<organism>
    <name type="scientific">Trichonephila clavata</name>
    <name type="common">Joro spider</name>
    <name type="synonym">Nephila clavata</name>
    <dbReference type="NCBI Taxonomy" id="2740835"/>
    <lineage>
        <taxon>Eukaryota</taxon>
        <taxon>Metazoa</taxon>
        <taxon>Ecdysozoa</taxon>
        <taxon>Arthropoda</taxon>
        <taxon>Chelicerata</taxon>
        <taxon>Arachnida</taxon>
        <taxon>Araneae</taxon>
        <taxon>Araneomorphae</taxon>
        <taxon>Entelegynae</taxon>
        <taxon>Araneoidea</taxon>
        <taxon>Nephilidae</taxon>
        <taxon>Trichonephila</taxon>
    </lineage>
</organism>
<keyword id="KW-0903">Direct protein sequencing</keyword>
<keyword id="KW-1015">Disulfide bond</keyword>
<keyword id="KW-0872">Ion channel impairing toxin</keyword>
<keyword id="KW-0528">Neurotoxin</keyword>
<keyword id="KW-0632">Potassium channel impairing toxin</keyword>
<keyword id="KW-0964">Secreted</keyword>
<keyword id="KW-0732">Signal</keyword>
<keyword id="KW-0800">Toxin</keyword>
<keyword id="KW-1220">Voltage-gated potassium channel impairing toxin</keyword>
<keyword id="KW-0738">Voltage-gated sodium channel impairing toxin</keyword>
<sequence>MIYQVVLLLLVSPAPVSAAGCNPDCTGIQCGWPRCPGGQNPVMDKCVSCCPFCPPKSAQG</sequence>
<evidence type="ECO:0000269" key="1">
    <source>
    </source>
</evidence>
<evidence type="ECO:0000303" key="2">
    <source>
    </source>
</evidence>
<evidence type="ECO:0000305" key="3"/>
<evidence type="ECO:0000305" key="4">
    <source>
    </source>
</evidence>
<reference key="1">
    <citation type="journal article" date="2017" name="Amino Acids">
        <title>An insecticidal toxin from Nephila clavata spider venom.</title>
        <authorList>
            <person name="Jin L."/>
            <person name="Fang M."/>
            <person name="Chen M."/>
            <person name="Zhou C."/>
            <person name="Ombati R."/>
            <person name="Hakim M.A."/>
            <person name="Mo G."/>
            <person name="Lai R."/>
            <person name="Yan X."/>
            <person name="Wang Y."/>
            <person name="Yang S."/>
        </authorList>
    </citation>
    <scope>NUCLEOTIDE SEQUENCE [MRNA]</scope>
    <scope>PROTEIN SEQUENCE OF 20-60</scope>
    <scope>FUNCTION</scope>
    <scope>SUBCELLULAR LOCATION</scope>
    <scope>MASS SPECTROMETRY</scope>
    <scope>PRESENCE OF DISULFIDE BONDS</scope>
    <scope>TOXIC DOSE</scope>
    <source>
        <tissue>Venom</tissue>
    </source>
</reference>
<proteinExistence type="evidence at protein level"/>